<keyword id="KW-0963">Cytoplasm</keyword>
<keyword id="KW-0444">Lipid biosynthesis</keyword>
<keyword id="KW-0443">Lipid metabolism</keyword>
<keyword id="KW-0520">NAD</keyword>
<keyword id="KW-0521">NADP</keyword>
<keyword id="KW-0547">Nucleotide-binding</keyword>
<keyword id="KW-0560">Oxidoreductase</keyword>
<keyword id="KW-0594">Phospholipid biosynthesis</keyword>
<keyword id="KW-1208">Phospholipid metabolism</keyword>
<dbReference type="EC" id="1.1.1.94" evidence="1"/>
<dbReference type="EMBL" id="CU928162">
    <property type="protein sequence ID" value="CAR10425.2"/>
    <property type="molecule type" value="Genomic_DNA"/>
</dbReference>
<dbReference type="RefSeq" id="WP_001076194.1">
    <property type="nucleotide sequence ID" value="NC_011745.1"/>
</dbReference>
<dbReference type="SMR" id="B7N254"/>
<dbReference type="GeneID" id="93778322"/>
<dbReference type="KEGG" id="ecq:ECED1_4294"/>
<dbReference type="HOGENOM" id="CLU_033449_0_2_6"/>
<dbReference type="UniPathway" id="UPA00940"/>
<dbReference type="Proteomes" id="UP000000748">
    <property type="component" value="Chromosome"/>
</dbReference>
<dbReference type="GO" id="GO:0005829">
    <property type="term" value="C:cytosol"/>
    <property type="evidence" value="ECO:0007669"/>
    <property type="project" value="TreeGrafter"/>
</dbReference>
<dbReference type="GO" id="GO:0047952">
    <property type="term" value="F:glycerol-3-phosphate dehydrogenase [NAD(P)+] activity"/>
    <property type="evidence" value="ECO:0007669"/>
    <property type="project" value="UniProtKB-UniRule"/>
</dbReference>
<dbReference type="GO" id="GO:0051287">
    <property type="term" value="F:NAD binding"/>
    <property type="evidence" value="ECO:0007669"/>
    <property type="project" value="InterPro"/>
</dbReference>
<dbReference type="GO" id="GO:0005975">
    <property type="term" value="P:carbohydrate metabolic process"/>
    <property type="evidence" value="ECO:0007669"/>
    <property type="project" value="InterPro"/>
</dbReference>
<dbReference type="GO" id="GO:0046167">
    <property type="term" value="P:glycerol-3-phosphate biosynthetic process"/>
    <property type="evidence" value="ECO:0007669"/>
    <property type="project" value="UniProtKB-UniRule"/>
</dbReference>
<dbReference type="GO" id="GO:0046168">
    <property type="term" value="P:glycerol-3-phosphate catabolic process"/>
    <property type="evidence" value="ECO:0007669"/>
    <property type="project" value="InterPro"/>
</dbReference>
<dbReference type="GO" id="GO:0046474">
    <property type="term" value="P:glycerophospholipid biosynthetic process"/>
    <property type="evidence" value="ECO:0007669"/>
    <property type="project" value="TreeGrafter"/>
</dbReference>
<dbReference type="FunFam" id="1.10.1040.10:FF:000001">
    <property type="entry name" value="Glycerol-3-phosphate dehydrogenase [NAD(P)+]"/>
    <property type="match status" value="1"/>
</dbReference>
<dbReference type="FunFam" id="3.40.50.720:FF:000019">
    <property type="entry name" value="Glycerol-3-phosphate dehydrogenase [NAD(P)+]"/>
    <property type="match status" value="1"/>
</dbReference>
<dbReference type="Gene3D" id="1.10.1040.10">
    <property type="entry name" value="N-(1-d-carboxylethyl)-l-norvaline Dehydrogenase, domain 2"/>
    <property type="match status" value="1"/>
</dbReference>
<dbReference type="Gene3D" id="3.40.50.720">
    <property type="entry name" value="NAD(P)-binding Rossmann-like Domain"/>
    <property type="match status" value="1"/>
</dbReference>
<dbReference type="HAMAP" id="MF_00394">
    <property type="entry name" value="NAD_Glyc3P_dehydrog"/>
    <property type="match status" value="1"/>
</dbReference>
<dbReference type="InterPro" id="IPR008927">
    <property type="entry name" value="6-PGluconate_DH-like_C_sf"/>
</dbReference>
<dbReference type="InterPro" id="IPR013328">
    <property type="entry name" value="6PGD_dom2"/>
</dbReference>
<dbReference type="InterPro" id="IPR006168">
    <property type="entry name" value="G3P_DH_NAD-dep"/>
</dbReference>
<dbReference type="InterPro" id="IPR006109">
    <property type="entry name" value="G3P_DH_NAD-dep_C"/>
</dbReference>
<dbReference type="InterPro" id="IPR011128">
    <property type="entry name" value="G3P_DH_NAD-dep_N"/>
</dbReference>
<dbReference type="InterPro" id="IPR036291">
    <property type="entry name" value="NAD(P)-bd_dom_sf"/>
</dbReference>
<dbReference type="NCBIfam" id="NF000939">
    <property type="entry name" value="PRK00094.1-1"/>
    <property type="match status" value="1"/>
</dbReference>
<dbReference type="NCBIfam" id="NF000940">
    <property type="entry name" value="PRK00094.1-2"/>
    <property type="match status" value="1"/>
</dbReference>
<dbReference type="NCBIfam" id="NF000942">
    <property type="entry name" value="PRK00094.1-4"/>
    <property type="match status" value="1"/>
</dbReference>
<dbReference type="PANTHER" id="PTHR11728">
    <property type="entry name" value="GLYCEROL-3-PHOSPHATE DEHYDROGENASE"/>
    <property type="match status" value="1"/>
</dbReference>
<dbReference type="PANTHER" id="PTHR11728:SF1">
    <property type="entry name" value="GLYCEROL-3-PHOSPHATE DEHYDROGENASE [NAD(+)] 2, CHLOROPLASTIC"/>
    <property type="match status" value="1"/>
</dbReference>
<dbReference type="Pfam" id="PF07479">
    <property type="entry name" value="NAD_Gly3P_dh_C"/>
    <property type="match status" value="1"/>
</dbReference>
<dbReference type="Pfam" id="PF01210">
    <property type="entry name" value="NAD_Gly3P_dh_N"/>
    <property type="match status" value="1"/>
</dbReference>
<dbReference type="PIRSF" id="PIRSF000114">
    <property type="entry name" value="Glycerol-3-P_dh"/>
    <property type="match status" value="1"/>
</dbReference>
<dbReference type="PRINTS" id="PR00077">
    <property type="entry name" value="GPDHDRGNASE"/>
</dbReference>
<dbReference type="SUPFAM" id="SSF48179">
    <property type="entry name" value="6-phosphogluconate dehydrogenase C-terminal domain-like"/>
    <property type="match status" value="1"/>
</dbReference>
<dbReference type="SUPFAM" id="SSF51735">
    <property type="entry name" value="NAD(P)-binding Rossmann-fold domains"/>
    <property type="match status" value="1"/>
</dbReference>
<dbReference type="PROSITE" id="PS00957">
    <property type="entry name" value="NAD_G3PDH"/>
    <property type="match status" value="1"/>
</dbReference>
<reference key="1">
    <citation type="journal article" date="2009" name="PLoS Genet.">
        <title>Organised genome dynamics in the Escherichia coli species results in highly diverse adaptive paths.</title>
        <authorList>
            <person name="Touchon M."/>
            <person name="Hoede C."/>
            <person name="Tenaillon O."/>
            <person name="Barbe V."/>
            <person name="Baeriswyl S."/>
            <person name="Bidet P."/>
            <person name="Bingen E."/>
            <person name="Bonacorsi S."/>
            <person name="Bouchier C."/>
            <person name="Bouvet O."/>
            <person name="Calteau A."/>
            <person name="Chiapello H."/>
            <person name="Clermont O."/>
            <person name="Cruveiller S."/>
            <person name="Danchin A."/>
            <person name="Diard M."/>
            <person name="Dossat C."/>
            <person name="Karoui M.E."/>
            <person name="Frapy E."/>
            <person name="Garry L."/>
            <person name="Ghigo J.M."/>
            <person name="Gilles A.M."/>
            <person name="Johnson J."/>
            <person name="Le Bouguenec C."/>
            <person name="Lescat M."/>
            <person name="Mangenot S."/>
            <person name="Martinez-Jehanne V."/>
            <person name="Matic I."/>
            <person name="Nassif X."/>
            <person name="Oztas S."/>
            <person name="Petit M.A."/>
            <person name="Pichon C."/>
            <person name="Rouy Z."/>
            <person name="Ruf C.S."/>
            <person name="Schneider D."/>
            <person name="Tourret J."/>
            <person name="Vacherie B."/>
            <person name="Vallenet D."/>
            <person name="Medigue C."/>
            <person name="Rocha E.P.C."/>
            <person name="Denamur E."/>
        </authorList>
    </citation>
    <scope>NUCLEOTIDE SEQUENCE [LARGE SCALE GENOMIC DNA]</scope>
    <source>
        <strain>ED1a</strain>
    </source>
</reference>
<feature type="chain" id="PRO_1000190149" description="Glycerol-3-phosphate dehydrogenase [NAD(P)+]">
    <location>
        <begin position="1"/>
        <end position="339"/>
    </location>
</feature>
<feature type="active site" description="Proton acceptor" evidence="1">
    <location>
        <position position="195"/>
    </location>
</feature>
<feature type="binding site" evidence="1">
    <location>
        <position position="15"/>
    </location>
    <ligand>
        <name>NADPH</name>
        <dbReference type="ChEBI" id="CHEBI:57783"/>
    </ligand>
</feature>
<feature type="binding site" evidence="1">
    <location>
        <position position="16"/>
    </location>
    <ligand>
        <name>NADPH</name>
        <dbReference type="ChEBI" id="CHEBI:57783"/>
    </ligand>
</feature>
<feature type="binding site" evidence="1">
    <location>
        <position position="36"/>
    </location>
    <ligand>
        <name>NADPH</name>
        <dbReference type="ChEBI" id="CHEBI:57783"/>
    </ligand>
</feature>
<feature type="binding site" evidence="1">
    <location>
        <position position="110"/>
    </location>
    <ligand>
        <name>NADPH</name>
        <dbReference type="ChEBI" id="CHEBI:57783"/>
    </ligand>
</feature>
<feature type="binding site" evidence="1">
    <location>
        <position position="110"/>
    </location>
    <ligand>
        <name>sn-glycerol 3-phosphate</name>
        <dbReference type="ChEBI" id="CHEBI:57597"/>
    </ligand>
</feature>
<feature type="binding site" evidence="1">
    <location>
        <position position="139"/>
    </location>
    <ligand>
        <name>sn-glycerol 3-phosphate</name>
        <dbReference type="ChEBI" id="CHEBI:57597"/>
    </ligand>
</feature>
<feature type="binding site" evidence="1">
    <location>
        <position position="141"/>
    </location>
    <ligand>
        <name>sn-glycerol 3-phosphate</name>
        <dbReference type="ChEBI" id="CHEBI:57597"/>
    </ligand>
</feature>
<feature type="binding site" evidence="1">
    <location>
        <position position="143"/>
    </location>
    <ligand>
        <name>NADPH</name>
        <dbReference type="ChEBI" id="CHEBI:57783"/>
    </ligand>
</feature>
<feature type="binding site" evidence="1">
    <location>
        <position position="195"/>
    </location>
    <ligand>
        <name>sn-glycerol 3-phosphate</name>
        <dbReference type="ChEBI" id="CHEBI:57597"/>
    </ligand>
</feature>
<feature type="binding site" evidence="1">
    <location>
        <position position="248"/>
    </location>
    <ligand>
        <name>sn-glycerol 3-phosphate</name>
        <dbReference type="ChEBI" id="CHEBI:57597"/>
    </ligand>
</feature>
<feature type="binding site" evidence="1">
    <location>
        <position position="258"/>
    </location>
    <ligand>
        <name>sn-glycerol 3-phosphate</name>
        <dbReference type="ChEBI" id="CHEBI:57597"/>
    </ligand>
</feature>
<feature type="binding site" evidence="1">
    <location>
        <position position="259"/>
    </location>
    <ligand>
        <name>NADPH</name>
        <dbReference type="ChEBI" id="CHEBI:57783"/>
    </ligand>
</feature>
<feature type="binding site" evidence="1">
    <location>
        <position position="259"/>
    </location>
    <ligand>
        <name>sn-glycerol 3-phosphate</name>
        <dbReference type="ChEBI" id="CHEBI:57597"/>
    </ligand>
</feature>
<feature type="binding site" evidence="1">
    <location>
        <position position="260"/>
    </location>
    <ligand>
        <name>sn-glycerol 3-phosphate</name>
        <dbReference type="ChEBI" id="CHEBI:57597"/>
    </ligand>
</feature>
<feature type="binding site" evidence="1">
    <location>
        <position position="283"/>
    </location>
    <ligand>
        <name>NADPH</name>
        <dbReference type="ChEBI" id="CHEBI:57783"/>
    </ligand>
</feature>
<feature type="binding site" evidence="1">
    <location>
        <position position="285"/>
    </location>
    <ligand>
        <name>NADPH</name>
        <dbReference type="ChEBI" id="CHEBI:57783"/>
    </ligand>
</feature>
<protein>
    <recommendedName>
        <fullName evidence="1">Glycerol-3-phosphate dehydrogenase [NAD(P)+]</fullName>
        <ecNumber evidence="1">1.1.1.94</ecNumber>
    </recommendedName>
    <alternativeName>
        <fullName evidence="1">NAD(P)(+)-dependent glycerol-3-phosphate dehydrogenase</fullName>
    </alternativeName>
    <alternativeName>
        <fullName evidence="1">NAD(P)H-dependent dihydroxyacetone-phosphate reductase</fullName>
    </alternativeName>
</protein>
<accession>B7N254</accession>
<name>GPDA_ECO81</name>
<gene>
    <name evidence="1" type="primary">gpsA</name>
    <name type="ordered locus">ECED1_4294</name>
</gene>
<comment type="function">
    <text evidence="1">Catalyzes the reduction of the glycolytic intermediate dihydroxyacetone phosphate (DHAP) to sn-glycerol 3-phosphate (G3P), the key precursor for phospholipid synthesis.</text>
</comment>
<comment type="catalytic activity">
    <reaction evidence="1">
        <text>sn-glycerol 3-phosphate + NAD(+) = dihydroxyacetone phosphate + NADH + H(+)</text>
        <dbReference type="Rhea" id="RHEA:11092"/>
        <dbReference type="ChEBI" id="CHEBI:15378"/>
        <dbReference type="ChEBI" id="CHEBI:57540"/>
        <dbReference type="ChEBI" id="CHEBI:57597"/>
        <dbReference type="ChEBI" id="CHEBI:57642"/>
        <dbReference type="ChEBI" id="CHEBI:57945"/>
        <dbReference type="EC" id="1.1.1.94"/>
    </reaction>
    <physiologicalReaction direction="right-to-left" evidence="1">
        <dbReference type="Rhea" id="RHEA:11094"/>
    </physiologicalReaction>
</comment>
<comment type="catalytic activity">
    <reaction evidence="1">
        <text>sn-glycerol 3-phosphate + NADP(+) = dihydroxyacetone phosphate + NADPH + H(+)</text>
        <dbReference type="Rhea" id="RHEA:11096"/>
        <dbReference type="ChEBI" id="CHEBI:15378"/>
        <dbReference type="ChEBI" id="CHEBI:57597"/>
        <dbReference type="ChEBI" id="CHEBI:57642"/>
        <dbReference type="ChEBI" id="CHEBI:57783"/>
        <dbReference type="ChEBI" id="CHEBI:58349"/>
        <dbReference type="EC" id="1.1.1.94"/>
    </reaction>
    <physiologicalReaction direction="right-to-left" evidence="1">
        <dbReference type="Rhea" id="RHEA:11098"/>
    </physiologicalReaction>
</comment>
<comment type="pathway">
    <text evidence="1">Membrane lipid metabolism; glycerophospholipid metabolism.</text>
</comment>
<comment type="subcellular location">
    <subcellularLocation>
        <location evidence="1">Cytoplasm</location>
    </subcellularLocation>
</comment>
<comment type="similarity">
    <text evidence="1">Belongs to the NAD-dependent glycerol-3-phosphate dehydrogenase family.</text>
</comment>
<organism>
    <name type="scientific">Escherichia coli O81 (strain ED1a)</name>
    <dbReference type="NCBI Taxonomy" id="585397"/>
    <lineage>
        <taxon>Bacteria</taxon>
        <taxon>Pseudomonadati</taxon>
        <taxon>Pseudomonadota</taxon>
        <taxon>Gammaproteobacteria</taxon>
        <taxon>Enterobacterales</taxon>
        <taxon>Enterobacteriaceae</taxon>
        <taxon>Escherichia</taxon>
    </lineage>
</organism>
<proteinExistence type="inferred from homology"/>
<sequence>MNQRNASMTVIGAGSYGTALAITLARNGHEVVLWGHDPEHIATLERDRCNAAFLPDVPFPDTLHLESDLATALAASRNILVVVPSHVFGEVLRQIKPLMRPDARLVWATKGLEAETGRLLQDVAREALGDQIPLAVISGPTFAKELAAGLPTAISLASTDQTFADDLQQLLHCGKSFRVYSNPDFIGVQLGGAVKNVIAIGAGMSDGIGFGANARTALITRGLAEMSRLGAALGADPATFMGMAGLGDLVLTCTDNQSRNRRFGMMLGQGMDVQSAQEKIGQVVEGYRNTKEVRELAHRFGVEMPITEEIYQVLYCGKNAREAALTLLGRARKDERSSH</sequence>
<evidence type="ECO:0000255" key="1">
    <source>
        <dbReference type="HAMAP-Rule" id="MF_00394"/>
    </source>
</evidence>